<gene>
    <name evidence="1" type="primary">rpl32</name>
    <name type="ordered locus">MoinCp069</name>
</gene>
<reference key="1">
    <citation type="submission" date="2005-09" db="EMBL/GenBank/DDBJ databases">
        <title>The chloroplast genome of mulberry: structural features and comparative analysis.</title>
        <authorList>
            <person name="Ravi V."/>
            <person name="Khurana J.P."/>
            <person name="Tyagi A.K."/>
            <person name="Khurana P."/>
        </authorList>
    </citation>
    <scope>NUCLEOTIDE SEQUENCE [LARGE SCALE GENOMIC DNA]</scope>
    <source>
        <strain>cv. K2</strain>
    </source>
</reference>
<accession>Q09WX0</accession>
<evidence type="ECO:0000255" key="1">
    <source>
        <dbReference type="HAMAP-Rule" id="MF_00340"/>
    </source>
</evidence>
<evidence type="ECO:0000305" key="2"/>
<keyword id="KW-0150">Chloroplast</keyword>
<keyword id="KW-0934">Plastid</keyword>
<keyword id="KW-0687">Ribonucleoprotein</keyword>
<keyword id="KW-0689">Ribosomal protein</keyword>
<sequence length="52" mass="6078">MAVPKKRTSISKKRIRKNIWKKKGYWAALKAFSLGKSLSTRNSKSFFYPTNK</sequence>
<name>RK32_MORIN</name>
<dbReference type="EMBL" id="DQ226511">
    <property type="protein sequence ID" value="ABB21004.1"/>
    <property type="molecule type" value="Genomic_DNA"/>
</dbReference>
<dbReference type="RefSeq" id="YP_762308.1">
    <property type="nucleotide sequence ID" value="NC_008359.1"/>
</dbReference>
<dbReference type="SMR" id="Q09WX0"/>
<dbReference type="GeneID" id="4290604"/>
<dbReference type="GO" id="GO:0009507">
    <property type="term" value="C:chloroplast"/>
    <property type="evidence" value="ECO:0007669"/>
    <property type="project" value="UniProtKB-SubCell"/>
</dbReference>
<dbReference type="GO" id="GO:0015934">
    <property type="term" value="C:large ribosomal subunit"/>
    <property type="evidence" value="ECO:0007669"/>
    <property type="project" value="InterPro"/>
</dbReference>
<dbReference type="GO" id="GO:0003735">
    <property type="term" value="F:structural constituent of ribosome"/>
    <property type="evidence" value="ECO:0007669"/>
    <property type="project" value="InterPro"/>
</dbReference>
<dbReference type="GO" id="GO:0006412">
    <property type="term" value="P:translation"/>
    <property type="evidence" value="ECO:0007669"/>
    <property type="project" value="UniProtKB-UniRule"/>
</dbReference>
<dbReference type="HAMAP" id="MF_00340">
    <property type="entry name" value="Ribosomal_bL32"/>
    <property type="match status" value="1"/>
</dbReference>
<dbReference type="InterPro" id="IPR002677">
    <property type="entry name" value="Ribosomal_bL32"/>
</dbReference>
<dbReference type="InterPro" id="IPR044958">
    <property type="entry name" value="Ribosomal_bL32_plant/cyanobact"/>
</dbReference>
<dbReference type="InterPro" id="IPR011332">
    <property type="entry name" value="Ribosomal_zn-bd"/>
</dbReference>
<dbReference type="PANTHER" id="PTHR36083">
    <property type="entry name" value="50S RIBOSOMAL PROTEIN L32, CHLOROPLASTIC"/>
    <property type="match status" value="1"/>
</dbReference>
<dbReference type="PANTHER" id="PTHR36083:SF1">
    <property type="entry name" value="LARGE RIBOSOMAL SUBUNIT PROTEIN BL32C"/>
    <property type="match status" value="1"/>
</dbReference>
<dbReference type="Pfam" id="PF01783">
    <property type="entry name" value="Ribosomal_L32p"/>
    <property type="match status" value="1"/>
</dbReference>
<dbReference type="SUPFAM" id="SSF57829">
    <property type="entry name" value="Zn-binding ribosomal proteins"/>
    <property type="match status" value="1"/>
</dbReference>
<comment type="subcellular location">
    <subcellularLocation>
        <location>Plastid</location>
        <location>Chloroplast</location>
    </subcellularLocation>
</comment>
<comment type="similarity">
    <text evidence="1">Belongs to the bacterial ribosomal protein bL32 family.</text>
</comment>
<organism>
    <name type="scientific">Morus indica</name>
    <name type="common">Mulberry</name>
    <dbReference type="NCBI Taxonomy" id="248361"/>
    <lineage>
        <taxon>Eukaryota</taxon>
        <taxon>Viridiplantae</taxon>
        <taxon>Streptophyta</taxon>
        <taxon>Embryophyta</taxon>
        <taxon>Tracheophyta</taxon>
        <taxon>Spermatophyta</taxon>
        <taxon>Magnoliopsida</taxon>
        <taxon>eudicotyledons</taxon>
        <taxon>Gunneridae</taxon>
        <taxon>Pentapetalae</taxon>
        <taxon>rosids</taxon>
        <taxon>fabids</taxon>
        <taxon>Rosales</taxon>
        <taxon>Moraceae</taxon>
        <taxon>Moreae</taxon>
        <taxon>Morus</taxon>
    </lineage>
</organism>
<feature type="chain" id="PRO_0000276476" description="Large ribosomal subunit protein bL32c">
    <location>
        <begin position="1"/>
        <end position="52"/>
    </location>
</feature>
<proteinExistence type="inferred from homology"/>
<protein>
    <recommendedName>
        <fullName evidence="1">Large ribosomal subunit protein bL32c</fullName>
    </recommendedName>
    <alternativeName>
        <fullName evidence="2">50S ribosomal protein L32, chloroplastic</fullName>
    </alternativeName>
</protein>
<geneLocation type="chloroplast"/>